<dbReference type="EC" id="1.5.1.53" evidence="2"/>
<dbReference type="EMBL" id="AB125182">
    <property type="protein sequence ID" value="BAD51970.1"/>
    <property type="molecule type" value="mRNA"/>
</dbReference>
<dbReference type="RefSeq" id="NP_001271578.1">
    <property type="nucleotide sequence ID" value="NM_001284649.1"/>
</dbReference>
<dbReference type="SMR" id="Q60HE5"/>
<dbReference type="STRING" id="9541.ENSMFAP00000023225"/>
<dbReference type="eggNOG" id="KOG0564">
    <property type="taxonomic scope" value="Eukaryota"/>
</dbReference>
<dbReference type="BRENDA" id="1.5.1.20">
    <property type="organism ID" value="1793"/>
</dbReference>
<dbReference type="UniPathway" id="UPA00193"/>
<dbReference type="Proteomes" id="UP000233100">
    <property type="component" value="Unplaced"/>
</dbReference>
<dbReference type="GO" id="GO:0005829">
    <property type="term" value="C:cytosol"/>
    <property type="evidence" value="ECO:0007669"/>
    <property type="project" value="TreeGrafter"/>
</dbReference>
<dbReference type="GO" id="GO:0071949">
    <property type="term" value="F:FAD binding"/>
    <property type="evidence" value="ECO:0007669"/>
    <property type="project" value="TreeGrafter"/>
</dbReference>
<dbReference type="GO" id="GO:0004489">
    <property type="term" value="F:methylenetetrahydrofolate reductase (NAD(P)H) activity"/>
    <property type="evidence" value="ECO:0000250"/>
    <property type="project" value="UniProtKB"/>
</dbReference>
<dbReference type="GO" id="GO:0106313">
    <property type="term" value="F:methylenetetrahydrofolate reductase (NADPH) activity"/>
    <property type="evidence" value="ECO:0007669"/>
    <property type="project" value="RHEA"/>
</dbReference>
<dbReference type="GO" id="GO:0009086">
    <property type="term" value="P:methionine biosynthetic process"/>
    <property type="evidence" value="ECO:0007669"/>
    <property type="project" value="TreeGrafter"/>
</dbReference>
<dbReference type="GO" id="GO:0035999">
    <property type="term" value="P:tetrahydrofolate interconversion"/>
    <property type="evidence" value="ECO:0000250"/>
    <property type="project" value="UniProtKB"/>
</dbReference>
<dbReference type="CDD" id="cd00537">
    <property type="entry name" value="MTHFR"/>
    <property type="match status" value="1"/>
</dbReference>
<dbReference type="FunFam" id="3.20.20.220:FF:000003">
    <property type="entry name" value="Methylenetetrahydrofolate reductase"/>
    <property type="match status" value="1"/>
</dbReference>
<dbReference type="Gene3D" id="3.20.20.220">
    <property type="match status" value="1"/>
</dbReference>
<dbReference type="InterPro" id="IPR029041">
    <property type="entry name" value="FAD-linked_oxidoreductase-like"/>
</dbReference>
<dbReference type="InterPro" id="IPR004621">
    <property type="entry name" value="Fadh2_euk"/>
</dbReference>
<dbReference type="InterPro" id="IPR003171">
    <property type="entry name" value="Mehydrof_redctse-like"/>
</dbReference>
<dbReference type="InterPro" id="IPR053806">
    <property type="entry name" value="MTHFR_C"/>
</dbReference>
<dbReference type="NCBIfam" id="TIGR00677">
    <property type="entry name" value="fadh2_euk"/>
    <property type="match status" value="1"/>
</dbReference>
<dbReference type="PANTHER" id="PTHR45754">
    <property type="entry name" value="METHYLENETETRAHYDROFOLATE REDUCTASE"/>
    <property type="match status" value="1"/>
</dbReference>
<dbReference type="PANTHER" id="PTHR45754:SF3">
    <property type="entry name" value="METHYLENETETRAHYDROFOLATE REDUCTASE (NADPH)"/>
    <property type="match status" value="1"/>
</dbReference>
<dbReference type="Pfam" id="PF02219">
    <property type="entry name" value="MTHFR"/>
    <property type="match status" value="1"/>
</dbReference>
<dbReference type="Pfam" id="PF21895">
    <property type="entry name" value="MTHFR_C"/>
    <property type="match status" value="1"/>
</dbReference>
<dbReference type="SUPFAM" id="SSF51730">
    <property type="entry name" value="FAD-linked oxidoreductase"/>
    <property type="match status" value="1"/>
</dbReference>
<gene>
    <name type="primary">MTHFR</name>
    <name type="ORF">QtrA-17780</name>
</gene>
<organism>
    <name type="scientific">Macaca fascicularis</name>
    <name type="common">Crab-eating macaque</name>
    <name type="synonym">Cynomolgus monkey</name>
    <dbReference type="NCBI Taxonomy" id="9541"/>
    <lineage>
        <taxon>Eukaryota</taxon>
        <taxon>Metazoa</taxon>
        <taxon>Chordata</taxon>
        <taxon>Craniata</taxon>
        <taxon>Vertebrata</taxon>
        <taxon>Euteleostomi</taxon>
        <taxon>Mammalia</taxon>
        <taxon>Eutheria</taxon>
        <taxon>Euarchontoglires</taxon>
        <taxon>Primates</taxon>
        <taxon>Haplorrhini</taxon>
        <taxon>Catarrhini</taxon>
        <taxon>Cercopithecidae</taxon>
        <taxon>Cercopithecinae</taxon>
        <taxon>Macaca</taxon>
    </lineage>
</organism>
<protein>
    <recommendedName>
        <fullName evidence="4">Methylenetetrahydrofolate reductase (NADPH)</fullName>
        <ecNumber evidence="2">1.5.1.53</ecNumber>
    </recommendedName>
</protein>
<evidence type="ECO:0000250" key="1"/>
<evidence type="ECO:0000250" key="2">
    <source>
        <dbReference type="UniProtKB" id="P42898"/>
    </source>
</evidence>
<evidence type="ECO:0000256" key="3">
    <source>
        <dbReference type="SAM" id="MobiDB-lite"/>
    </source>
</evidence>
<evidence type="ECO:0000305" key="4"/>
<sequence length="656" mass="74656">MVNEARGNDSLNPCLEGSASSSSESSKDSSRCSTPGLDPERHERLRDKMRRRMESGDKWFSLEFFPPRTAEGAVNLISRFDRMAAGGPLFIDVTWHPAGDPGSDKETSSMMIASTAVNYCGLETILHMTCCCQRLEEITGHLHKAKQLGLKNIMALRGDPIGDQWEEEEGGFNYAVDLVKHIRSEFGDYFDLCVAGYPKGHPEAGSFEADLKHLKEKVSAGADFIITQLFFEADTFFRFVKACTDMGITCPIVPGIFPIQGYHSLRQLVKQSKLEVPQEIKDVIEPIKDNDAAIRNYGIELAVSLCHELLASGLVPGLHFYTLNREMATTEVLKRLGMWTEDPRRPLPWALSAHPKRREEDVRPIFWASRPKSYIYRTQEWDEFPNGRWGNSSSPAFGELKDYYLFYLKSKSPRELLLKMWGEELTSEESVFEVFVLYLSGEPNRNGHKVTCLPWNDEPLAAETSLLKEELLRVNRQGILTINSQPNINGKPSSDPVVGWGPSGGYVFQKAYLEFFTSRETAEALLQVLKKYELRVNYHLVNVKGENITNAPELQPNAVTWGIFPGREIIQPTVVDPISFMFWKDEAFALWIEQWGKLYEEESPSRTIIQYIHDNYFLVNLVDNDFPLDNCLWQVVEDALELLNRPTQNEREMEAP</sequence>
<reference key="1">
    <citation type="submission" date="2003-10" db="EMBL/GenBank/DDBJ databases">
        <title>Isolation and characterization of cDNA for macaque neurological disease genes.</title>
        <authorList>
            <person name="Kusuda J."/>
            <person name="Osada N."/>
            <person name="Tanuma R."/>
            <person name="Hirata M."/>
            <person name="Sugano S."/>
            <person name="Hashimoto K."/>
        </authorList>
    </citation>
    <scope>NUCLEOTIDE SEQUENCE [LARGE SCALE MRNA]</scope>
    <source>
        <tissue>Temporal cortex</tissue>
    </source>
</reference>
<proteinExistence type="evidence at transcript level"/>
<comment type="function">
    <text evidence="2">Catalyzes the conversion of 5,10-methylenetetrahydrofolate to 5-methyltetrahydrofolate, a cosubstrate for homocysteine remethylation to methionine. Represents a key regulatory connection between the folate and methionine cycles.</text>
</comment>
<comment type="catalytic activity">
    <reaction evidence="2">
        <text>(6S)-5-methyl-5,6,7,8-tetrahydrofolate + NADP(+) = (6R)-5,10-methylene-5,6,7,8-tetrahydrofolate + NADPH + H(+)</text>
        <dbReference type="Rhea" id="RHEA:19817"/>
        <dbReference type="ChEBI" id="CHEBI:15378"/>
        <dbReference type="ChEBI" id="CHEBI:15636"/>
        <dbReference type="ChEBI" id="CHEBI:18608"/>
        <dbReference type="ChEBI" id="CHEBI:57783"/>
        <dbReference type="ChEBI" id="CHEBI:58349"/>
        <dbReference type="EC" id="1.5.1.53"/>
    </reaction>
    <physiologicalReaction direction="right-to-left" evidence="2">
        <dbReference type="Rhea" id="RHEA:19819"/>
    </physiologicalReaction>
</comment>
<comment type="cofactor">
    <cofactor evidence="2">
        <name>FAD</name>
        <dbReference type="ChEBI" id="CHEBI:57692"/>
    </cofactor>
</comment>
<comment type="activity regulation">
    <text evidence="2">Allosterically regulated by S-adenosylmethionine (SAM).</text>
</comment>
<comment type="pathway">
    <text evidence="2">One-carbon metabolism; tetrahydrofolate interconversion.</text>
</comment>
<comment type="subunit">
    <text evidence="2">Homodimer.</text>
</comment>
<comment type="domain">
    <text evidence="2">Contains a serine-rich phosphorylation region at the N-terminal and an eukaryote-only S-adenosylmethionine (SAM)-binding domain at the C-terminal. Through asymmetric homodimerization, the two regions are positioned next to each other and N-terminal phosphorylation increases sensitivity to SAM binding and inhibition.</text>
</comment>
<comment type="PTM">
    <text evidence="2">Phosphorylation of an N-terminal serine-rich phosphorylation region increases sensitivity to S-adenosylmethionine and inhibition.</text>
</comment>
<comment type="similarity">
    <text evidence="4">Belongs to the methylenetetrahydrofolate reductase family.</text>
</comment>
<feature type="chain" id="PRO_0000190246" description="Methylenetetrahydrofolate reductase (NADPH)">
    <location>
        <begin position="1"/>
        <end position="656"/>
    </location>
</feature>
<feature type="region of interest" description="Disordered" evidence="3">
    <location>
        <begin position="1"/>
        <end position="46"/>
    </location>
</feature>
<feature type="active site" description="Proton donor/acceptor" evidence="1">
    <location>
        <position position="63"/>
    </location>
</feature>
<feature type="binding site" evidence="1">
    <location>
        <begin position="63"/>
        <end position="68"/>
    </location>
    <ligand>
        <name>NAD(+)</name>
        <dbReference type="ChEBI" id="CHEBI:57540"/>
    </ligand>
</feature>
<feature type="binding site" evidence="2">
    <location>
        <begin position="94"/>
        <end position="95"/>
    </location>
    <ligand>
        <name>FAD</name>
        <dbReference type="ChEBI" id="CHEBI:57692"/>
    </ligand>
</feature>
<feature type="binding site" evidence="1">
    <location>
        <begin position="94"/>
        <end position="95"/>
    </location>
    <ligand>
        <name>NAD(+)</name>
        <dbReference type="ChEBI" id="CHEBI:57540"/>
    </ligand>
</feature>
<feature type="binding site" evidence="2">
    <location>
        <position position="127"/>
    </location>
    <ligand>
        <name>FAD</name>
        <dbReference type="ChEBI" id="CHEBI:57692"/>
    </ligand>
</feature>
<feature type="binding site" evidence="2">
    <location>
        <begin position="157"/>
        <end position="159"/>
    </location>
    <ligand>
        <name>FAD</name>
        <dbReference type="ChEBI" id="CHEBI:57692"/>
    </ligand>
</feature>
<feature type="binding site" evidence="1">
    <location>
        <position position="159"/>
    </location>
    <ligand>
        <name>substrate</name>
    </ligand>
</feature>
<feature type="binding site" evidence="2">
    <location>
        <begin position="174"/>
        <end position="175"/>
    </location>
    <ligand>
        <name>FAD</name>
        <dbReference type="ChEBI" id="CHEBI:57692"/>
    </ligand>
</feature>
<feature type="binding site" evidence="2">
    <location>
        <position position="197"/>
    </location>
    <ligand>
        <name>FAD</name>
        <dbReference type="ChEBI" id="CHEBI:57692"/>
    </ligand>
</feature>
<feature type="binding site" evidence="2">
    <location>
        <begin position="201"/>
        <end position="204"/>
    </location>
    <ligand>
        <name>FAD</name>
        <dbReference type="ChEBI" id="CHEBI:57692"/>
    </ligand>
</feature>
<feature type="binding site" evidence="2">
    <location>
        <position position="210"/>
    </location>
    <ligand>
        <name>FAD</name>
        <dbReference type="ChEBI" id="CHEBI:57692"/>
    </ligand>
</feature>
<feature type="binding site" evidence="2">
    <location>
        <position position="217"/>
    </location>
    <ligand>
        <name>FAD</name>
        <dbReference type="ChEBI" id="CHEBI:57692"/>
    </ligand>
</feature>
<feature type="binding site" evidence="1">
    <location>
        <position position="228"/>
    </location>
    <ligand>
        <name>substrate</name>
    </ligand>
</feature>
<feature type="binding site" evidence="1">
    <location>
        <position position="321"/>
    </location>
    <ligand>
        <name>substrate</name>
    </ligand>
</feature>
<feature type="binding site" evidence="1">
    <location>
        <position position="325"/>
    </location>
    <ligand>
        <name>substrate</name>
    </ligand>
</feature>
<feature type="binding site" evidence="2">
    <location>
        <position position="456"/>
    </location>
    <ligand>
        <name>S-adenosyl-L-methionine</name>
        <dbReference type="ChEBI" id="CHEBI:59789"/>
    </ligand>
</feature>
<feature type="binding site" evidence="2">
    <location>
        <begin position="461"/>
        <end position="464"/>
    </location>
    <ligand>
        <name>S-adenosyl-L-methionine</name>
        <dbReference type="ChEBI" id="CHEBI:59789"/>
    </ligand>
</feature>
<feature type="binding site" evidence="2">
    <location>
        <begin position="481"/>
        <end position="485"/>
    </location>
    <ligand>
        <name>S-adenosyl-L-methionine</name>
        <dbReference type="ChEBI" id="CHEBI:59789"/>
    </ligand>
</feature>
<feature type="binding site" evidence="2">
    <location>
        <position position="560"/>
    </location>
    <ligand>
        <name>S-adenosyl-L-methionine</name>
        <dbReference type="ChEBI" id="CHEBI:59789"/>
    </ligand>
</feature>
<feature type="binding site" evidence="2">
    <location>
        <position position="573"/>
    </location>
    <ligand>
        <name>S-adenosyl-L-methionine</name>
        <dbReference type="ChEBI" id="CHEBI:59789"/>
    </ligand>
</feature>
<feature type="modified residue" description="Phosphoserine" evidence="2">
    <location>
        <position position="10"/>
    </location>
</feature>
<feature type="modified residue" description="Phosphoserine" evidence="2">
    <location>
        <position position="18"/>
    </location>
</feature>
<feature type="modified residue" description="Phosphoserine" evidence="2">
    <location>
        <position position="20"/>
    </location>
</feature>
<feature type="modified residue" description="Phosphoserine" evidence="2">
    <location>
        <position position="21"/>
    </location>
</feature>
<feature type="modified residue" description="Phosphoserine" evidence="2">
    <location>
        <position position="23"/>
    </location>
</feature>
<feature type="modified residue" description="Phosphoserine" evidence="2">
    <location>
        <position position="25"/>
    </location>
</feature>
<feature type="modified residue" description="Phosphoserine" evidence="2">
    <location>
        <position position="26"/>
    </location>
</feature>
<feature type="modified residue" description="Phosphoserine" evidence="2">
    <location>
        <position position="29"/>
    </location>
</feature>
<feature type="modified residue" description="Phosphoserine" evidence="2">
    <location>
        <position position="30"/>
    </location>
</feature>
<feature type="modified residue" description="Phosphothreonine" evidence="2">
    <location>
        <position position="34"/>
    </location>
</feature>
<feature type="modified residue" description="Phosphothreonine" evidence="2">
    <location>
        <position position="94"/>
    </location>
</feature>
<feature type="modified residue" description="Phosphoserine" evidence="2">
    <location>
        <position position="103"/>
    </location>
</feature>
<feature type="modified residue" description="Phosphoserine" evidence="2">
    <location>
        <position position="394"/>
    </location>
</feature>
<feature type="modified residue" description="Phosphothreonine" evidence="2">
    <location>
        <position position="451"/>
    </location>
</feature>
<name>MTHR_MACFA</name>
<accession>Q60HE5</accession>
<keyword id="KW-0021">Allosteric enzyme</keyword>
<keyword id="KW-0274">FAD</keyword>
<keyword id="KW-0285">Flavoprotein</keyword>
<keyword id="KW-0521">NADP</keyword>
<keyword id="KW-0560">Oxidoreductase</keyword>
<keyword id="KW-0597">Phosphoprotein</keyword>
<keyword id="KW-1185">Reference proteome</keyword>